<reference key="1">
    <citation type="submission" date="2009-03" db="EMBL/GenBank/DDBJ databases">
        <title>Complete genome sequence of Edwardsiella ictaluri 93-146.</title>
        <authorList>
            <person name="Williams M.L."/>
            <person name="Gillaspy A.F."/>
            <person name="Dyer D.W."/>
            <person name="Thune R.L."/>
            <person name="Waldbieser G.C."/>
            <person name="Schuster S.C."/>
            <person name="Gipson J."/>
            <person name="Zaitshik J."/>
            <person name="Landry C."/>
            <person name="Lawrence M.L."/>
        </authorList>
    </citation>
    <scope>NUCLEOTIDE SEQUENCE [LARGE SCALE GENOMIC DNA]</scope>
    <source>
        <strain>93-146</strain>
    </source>
</reference>
<accession>C5B704</accession>
<protein>
    <recommendedName>
        <fullName evidence="1">4-hydroxybenzoate octaprenyltransferase</fullName>
        <ecNumber evidence="1">2.5.1.39</ecNumber>
    </recommendedName>
    <alternativeName>
        <fullName evidence="1">4-HB polyprenyltransferase</fullName>
    </alternativeName>
</protein>
<feature type="chain" id="PRO_1000215803" description="4-hydroxybenzoate octaprenyltransferase">
    <location>
        <begin position="1"/>
        <end position="287"/>
    </location>
</feature>
<feature type="transmembrane region" description="Helical" evidence="1">
    <location>
        <begin position="23"/>
        <end position="43"/>
    </location>
</feature>
<feature type="transmembrane region" description="Helical" evidence="1">
    <location>
        <begin position="46"/>
        <end position="66"/>
    </location>
</feature>
<feature type="transmembrane region" description="Helical" evidence="1">
    <location>
        <begin position="99"/>
        <end position="119"/>
    </location>
</feature>
<feature type="transmembrane region" description="Helical" evidence="1">
    <location>
        <begin position="141"/>
        <end position="161"/>
    </location>
</feature>
<feature type="transmembrane region" description="Helical" evidence="1">
    <location>
        <begin position="162"/>
        <end position="182"/>
    </location>
</feature>
<feature type="transmembrane region" description="Helical" evidence="1">
    <location>
        <begin position="213"/>
        <end position="233"/>
    </location>
</feature>
<feature type="transmembrane region" description="Helical" evidence="1">
    <location>
        <begin position="237"/>
        <end position="257"/>
    </location>
</feature>
<feature type="transmembrane region" description="Helical" evidence="1">
    <location>
        <begin position="266"/>
        <end position="286"/>
    </location>
</feature>
<keyword id="KW-0997">Cell inner membrane</keyword>
<keyword id="KW-1003">Cell membrane</keyword>
<keyword id="KW-0460">Magnesium</keyword>
<keyword id="KW-0472">Membrane</keyword>
<keyword id="KW-0808">Transferase</keyword>
<keyword id="KW-0812">Transmembrane</keyword>
<keyword id="KW-1133">Transmembrane helix</keyword>
<keyword id="KW-0831">Ubiquinone biosynthesis</keyword>
<sequence length="287" mass="32118">MEGCVAQSKWLAYCRLMRIDKPIGSLLLLWPTYWALWLAGGTAPGGKLLLVFTCGVFFMRAAGCVINDFADRHFDGHVKRTCQRPLPCGALSEREAKALFVLLVGLSFALVLTLNAMTIWLSVAALTLAWLYPFIKRFSHLPQVILGMAFGWSIPMAYAAVGESLPLSCWLLFAANICWTVAYDTQYAMVDRDDDLRIGIKSTAILFGRYDRLVIGLLQLATLLLLLWVGDLNQLQGAYYWGVLLAAVLFVYQQQLITRRARTSCFRAFMNNNYVGLILFLGILLAL</sequence>
<evidence type="ECO:0000255" key="1">
    <source>
        <dbReference type="HAMAP-Rule" id="MF_01635"/>
    </source>
</evidence>
<name>UBIA_EDWI9</name>
<gene>
    <name evidence="1" type="primary">ubiA</name>
    <name type="ordered locus">NT01EI_0223</name>
</gene>
<organism>
    <name type="scientific">Edwardsiella ictaluri (strain 93-146)</name>
    <dbReference type="NCBI Taxonomy" id="634503"/>
    <lineage>
        <taxon>Bacteria</taxon>
        <taxon>Pseudomonadati</taxon>
        <taxon>Pseudomonadota</taxon>
        <taxon>Gammaproteobacteria</taxon>
        <taxon>Enterobacterales</taxon>
        <taxon>Hafniaceae</taxon>
        <taxon>Edwardsiella</taxon>
    </lineage>
</organism>
<comment type="function">
    <text evidence="1">Catalyzes the prenylation of para-hydroxybenzoate (PHB) with an all-trans polyprenyl group. Mediates the second step in the final reaction sequence of ubiquinone-8 (UQ-8) biosynthesis, which is the condensation of the polyisoprenoid side chain with PHB, generating the first membrane-bound Q intermediate 3-octaprenyl-4-hydroxybenzoate.</text>
</comment>
<comment type="catalytic activity">
    <reaction evidence="1">
        <text>all-trans-octaprenyl diphosphate + 4-hydroxybenzoate = 4-hydroxy-3-(all-trans-octaprenyl)benzoate + diphosphate</text>
        <dbReference type="Rhea" id="RHEA:27782"/>
        <dbReference type="ChEBI" id="CHEBI:1617"/>
        <dbReference type="ChEBI" id="CHEBI:17879"/>
        <dbReference type="ChEBI" id="CHEBI:33019"/>
        <dbReference type="ChEBI" id="CHEBI:57711"/>
        <dbReference type="EC" id="2.5.1.39"/>
    </reaction>
</comment>
<comment type="cofactor">
    <cofactor evidence="1">
        <name>Mg(2+)</name>
        <dbReference type="ChEBI" id="CHEBI:18420"/>
    </cofactor>
</comment>
<comment type="pathway">
    <text evidence="1">Cofactor biosynthesis; ubiquinone biosynthesis.</text>
</comment>
<comment type="subcellular location">
    <subcellularLocation>
        <location evidence="1">Cell inner membrane</location>
        <topology evidence="1">Multi-pass membrane protein</topology>
    </subcellularLocation>
</comment>
<comment type="similarity">
    <text evidence="1">Belongs to the UbiA prenyltransferase family.</text>
</comment>
<dbReference type="EC" id="2.5.1.39" evidence="1"/>
<dbReference type="EMBL" id="CP001600">
    <property type="protein sequence ID" value="ACR67466.1"/>
    <property type="molecule type" value="Genomic_DNA"/>
</dbReference>
<dbReference type="SMR" id="C5B704"/>
<dbReference type="STRING" id="67780.B6E78_12240"/>
<dbReference type="KEGG" id="eic:NT01EI_0223"/>
<dbReference type="PATRIC" id="fig|634503.3.peg.199"/>
<dbReference type="HOGENOM" id="CLU_034879_1_0_6"/>
<dbReference type="OrthoDB" id="9782418at2"/>
<dbReference type="UniPathway" id="UPA00232"/>
<dbReference type="Proteomes" id="UP000001485">
    <property type="component" value="Chromosome"/>
</dbReference>
<dbReference type="GO" id="GO:0005886">
    <property type="term" value="C:plasma membrane"/>
    <property type="evidence" value="ECO:0007669"/>
    <property type="project" value="UniProtKB-SubCell"/>
</dbReference>
<dbReference type="GO" id="GO:0008412">
    <property type="term" value="F:4-hydroxybenzoate polyprenyltransferase activity"/>
    <property type="evidence" value="ECO:0007669"/>
    <property type="project" value="UniProtKB-UniRule"/>
</dbReference>
<dbReference type="GO" id="GO:0006744">
    <property type="term" value="P:ubiquinone biosynthetic process"/>
    <property type="evidence" value="ECO:0007669"/>
    <property type="project" value="UniProtKB-UniRule"/>
</dbReference>
<dbReference type="CDD" id="cd13959">
    <property type="entry name" value="PT_UbiA_COQ2"/>
    <property type="match status" value="1"/>
</dbReference>
<dbReference type="FunFam" id="1.10.357.140:FF:000002">
    <property type="entry name" value="4-hydroxybenzoate octaprenyltransferase"/>
    <property type="match status" value="1"/>
</dbReference>
<dbReference type="FunFam" id="1.20.120.1780:FF:000001">
    <property type="entry name" value="4-hydroxybenzoate octaprenyltransferase"/>
    <property type="match status" value="1"/>
</dbReference>
<dbReference type="Gene3D" id="1.10.357.140">
    <property type="entry name" value="UbiA prenyltransferase"/>
    <property type="match status" value="1"/>
</dbReference>
<dbReference type="Gene3D" id="1.20.120.1780">
    <property type="entry name" value="UbiA prenyltransferase"/>
    <property type="match status" value="1"/>
</dbReference>
<dbReference type="HAMAP" id="MF_01635">
    <property type="entry name" value="UbiA"/>
    <property type="match status" value="1"/>
</dbReference>
<dbReference type="InterPro" id="IPR006370">
    <property type="entry name" value="HB_polyprenyltransferase-like"/>
</dbReference>
<dbReference type="InterPro" id="IPR039653">
    <property type="entry name" value="Prenyltransferase"/>
</dbReference>
<dbReference type="InterPro" id="IPR000537">
    <property type="entry name" value="UbiA_prenyltransferase"/>
</dbReference>
<dbReference type="InterPro" id="IPR030470">
    <property type="entry name" value="UbiA_prenylTrfase_CS"/>
</dbReference>
<dbReference type="InterPro" id="IPR044878">
    <property type="entry name" value="UbiA_sf"/>
</dbReference>
<dbReference type="NCBIfam" id="TIGR01474">
    <property type="entry name" value="ubiA_proteo"/>
    <property type="match status" value="1"/>
</dbReference>
<dbReference type="PANTHER" id="PTHR11048:SF28">
    <property type="entry name" value="4-HYDROXYBENZOATE POLYPRENYLTRANSFERASE, MITOCHONDRIAL"/>
    <property type="match status" value="1"/>
</dbReference>
<dbReference type="PANTHER" id="PTHR11048">
    <property type="entry name" value="PRENYLTRANSFERASES"/>
    <property type="match status" value="1"/>
</dbReference>
<dbReference type="Pfam" id="PF01040">
    <property type="entry name" value="UbiA"/>
    <property type="match status" value="1"/>
</dbReference>
<dbReference type="PROSITE" id="PS00943">
    <property type="entry name" value="UBIA"/>
    <property type="match status" value="1"/>
</dbReference>
<proteinExistence type="inferred from homology"/>